<organism>
    <name type="scientific">Sinorhizobium medicae (strain WSM419)</name>
    <name type="common">Ensifer medicae</name>
    <dbReference type="NCBI Taxonomy" id="366394"/>
    <lineage>
        <taxon>Bacteria</taxon>
        <taxon>Pseudomonadati</taxon>
        <taxon>Pseudomonadota</taxon>
        <taxon>Alphaproteobacteria</taxon>
        <taxon>Hyphomicrobiales</taxon>
        <taxon>Rhizobiaceae</taxon>
        <taxon>Sinorhizobium/Ensifer group</taxon>
        <taxon>Sinorhizobium</taxon>
    </lineage>
</organism>
<keyword id="KW-0418">Kinase</keyword>
<keyword id="KW-0547">Nucleotide-binding</keyword>
<keyword id="KW-0723">Serine/threonine-protein kinase</keyword>
<keyword id="KW-0808">Transferase</keyword>
<sequence length="273" mass="30169">MENRKNYFHLHLISDSTGETLIAAGRAAAAQFQSSHALEHVYPLIRNRKQLMQVMEAVDGAPGIVLYTIVDRELAGLIDQRCREIGVPCVSVLDPIIELFQSYLGSPSRRRSGAQHVMDAEYFARIEALNFTMDHDDGQIPADFDEADVVLVGVSRTSKTPTSIYLANRGIKTANIPIVPGVSLPEGLLTATKPLIVGLIASAERLSQVRQHRVLGTTQSFHGEDYTDRAAIAEELKYARSLCARNNWPLIDVTRRSIEETAAAIVALRPRLR</sequence>
<reference key="1">
    <citation type="submission" date="2007-06" db="EMBL/GenBank/DDBJ databases">
        <title>Complete sequence of Sinorhizobium medicae WSM419 chromosome.</title>
        <authorList>
            <consortium name="US DOE Joint Genome Institute"/>
            <person name="Copeland A."/>
            <person name="Lucas S."/>
            <person name="Lapidus A."/>
            <person name="Barry K."/>
            <person name="Glavina del Rio T."/>
            <person name="Dalin E."/>
            <person name="Tice H."/>
            <person name="Pitluck S."/>
            <person name="Chain P."/>
            <person name="Malfatti S."/>
            <person name="Shin M."/>
            <person name="Vergez L."/>
            <person name="Schmutz J."/>
            <person name="Larimer F."/>
            <person name="Land M."/>
            <person name="Hauser L."/>
            <person name="Kyrpides N."/>
            <person name="Mikhailova N."/>
            <person name="Reeve W.G."/>
            <person name="Richardson P."/>
        </authorList>
    </citation>
    <scope>NUCLEOTIDE SEQUENCE [LARGE SCALE GENOMIC DNA]</scope>
    <source>
        <strain>WSM419</strain>
    </source>
</reference>
<accession>A6UEF3</accession>
<proteinExistence type="inferred from homology"/>
<dbReference type="EC" id="2.7.11.32" evidence="1"/>
<dbReference type="EC" id="2.7.4.27" evidence="1"/>
<dbReference type="EMBL" id="CP000738">
    <property type="protein sequence ID" value="ABR62033.1"/>
    <property type="molecule type" value="Genomic_DNA"/>
</dbReference>
<dbReference type="RefSeq" id="WP_012067414.1">
    <property type="nucleotide sequence ID" value="NC_009636.1"/>
</dbReference>
<dbReference type="RefSeq" id="YP_001328868.1">
    <property type="nucleotide sequence ID" value="NC_009636.1"/>
</dbReference>
<dbReference type="SMR" id="A6UEF3"/>
<dbReference type="STRING" id="366394.Smed_3209"/>
<dbReference type="KEGG" id="smd:Smed_3209"/>
<dbReference type="PATRIC" id="fig|366394.8.peg.6447"/>
<dbReference type="eggNOG" id="COG1806">
    <property type="taxonomic scope" value="Bacteria"/>
</dbReference>
<dbReference type="HOGENOM" id="CLU_046206_2_0_5"/>
<dbReference type="OrthoDB" id="9782201at2"/>
<dbReference type="Proteomes" id="UP000001108">
    <property type="component" value="Chromosome"/>
</dbReference>
<dbReference type="GO" id="GO:0043531">
    <property type="term" value="F:ADP binding"/>
    <property type="evidence" value="ECO:0007669"/>
    <property type="project" value="UniProtKB-UniRule"/>
</dbReference>
<dbReference type="GO" id="GO:0005524">
    <property type="term" value="F:ATP binding"/>
    <property type="evidence" value="ECO:0007669"/>
    <property type="project" value="InterPro"/>
</dbReference>
<dbReference type="GO" id="GO:0016776">
    <property type="term" value="F:phosphotransferase activity, phosphate group as acceptor"/>
    <property type="evidence" value="ECO:0007669"/>
    <property type="project" value="UniProtKB-UniRule"/>
</dbReference>
<dbReference type="GO" id="GO:0004674">
    <property type="term" value="F:protein serine/threonine kinase activity"/>
    <property type="evidence" value="ECO:0007669"/>
    <property type="project" value="UniProtKB-UniRule"/>
</dbReference>
<dbReference type="HAMAP" id="MF_00921">
    <property type="entry name" value="PDRP"/>
    <property type="match status" value="1"/>
</dbReference>
<dbReference type="InterPro" id="IPR005177">
    <property type="entry name" value="Kinase-pyrophosphorylase"/>
</dbReference>
<dbReference type="InterPro" id="IPR026565">
    <property type="entry name" value="PPDK_reg"/>
</dbReference>
<dbReference type="NCBIfam" id="NF003742">
    <property type="entry name" value="PRK05339.1"/>
    <property type="match status" value="1"/>
</dbReference>
<dbReference type="PANTHER" id="PTHR31756">
    <property type="entry name" value="PYRUVATE, PHOSPHATE DIKINASE REGULATORY PROTEIN 1, CHLOROPLASTIC"/>
    <property type="match status" value="1"/>
</dbReference>
<dbReference type="PANTHER" id="PTHR31756:SF3">
    <property type="entry name" value="PYRUVATE, PHOSPHATE DIKINASE REGULATORY PROTEIN 1, CHLOROPLASTIC"/>
    <property type="match status" value="1"/>
</dbReference>
<dbReference type="Pfam" id="PF03618">
    <property type="entry name" value="Kinase-PPPase"/>
    <property type="match status" value="1"/>
</dbReference>
<feature type="chain" id="PRO_0000316743" description="Putative pyruvate, phosphate dikinase regulatory protein">
    <location>
        <begin position="1"/>
        <end position="273"/>
    </location>
</feature>
<feature type="binding site" evidence="1">
    <location>
        <begin position="153"/>
        <end position="160"/>
    </location>
    <ligand>
        <name>ADP</name>
        <dbReference type="ChEBI" id="CHEBI:456216"/>
    </ligand>
</feature>
<evidence type="ECO:0000255" key="1">
    <source>
        <dbReference type="HAMAP-Rule" id="MF_00921"/>
    </source>
</evidence>
<name>PDRP_SINMW</name>
<gene>
    <name type="ordered locus">Smed_3209</name>
</gene>
<comment type="function">
    <text evidence="1">Bifunctional serine/threonine kinase and phosphorylase involved in the regulation of the pyruvate, phosphate dikinase (PPDK) by catalyzing its phosphorylation/dephosphorylation.</text>
</comment>
<comment type="catalytic activity">
    <reaction evidence="1">
        <text>N(tele)-phospho-L-histidyl/L-threonyl-[pyruvate, phosphate dikinase] + ADP = N(tele)-phospho-L-histidyl/O-phospho-L-threonyl-[pyruvate, phosphate dikinase] + AMP + H(+)</text>
        <dbReference type="Rhea" id="RHEA:43692"/>
        <dbReference type="Rhea" id="RHEA-COMP:10650"/>
        <dbReference type="Rhea" id="RHEA-COMP:10651"/>
        <dbReference type="ChEBI" id="CHEBI:15378"/>
        <dbReference type="ChEBI" id="CHEBI:30013"/>
        <dbReference type="ChEBI" id="CHEBI:61977"/>
        <dbReference type="ChEBI" id="CHEBI:83586"/>
        <dbReference type="ChEBI" id="CHEBI:456215"/>
        <dbReference type="ChEBI" id="CHEBI:456216"/>
        <dbReference type="EC" id="2.7.11.32"/>
    </reaction>
</comment>
<comment type="catalytic activity">
    <reaction evidence="1">
        <text>N(tele)-phospho-L-histidyl/O-phospho-L-threonyl-[pyruvate, phosphate dikinase] + phosphate + H(+) = N(tele)-phospho-L-histidyl/L-threonyl-[pyruvate, phosphate dikinase] + diphosphate</text>
        <dbReference type="Rhea" id="RHEA:43696"/>
        <dbReference type="Rhea" id="RHEA-COMP:10650"/>
        <dbReference type="Rhea" id="RHEA-COMP:10651"/>
        <dbReference type="ChEBI" id="CHEBI:15378"/>
        <dbReference type="ChEBI" id="CHEBI:30013"/>
        <dbReference type="ChEBI" id="CHEBI:33019"/>
        <dbReference type="ChEBI" id="CHEBI:43474"/>
        <dbReference type="ChEBI" id="CHEBI:61977"/>
        <dbReference type="ChEBI" id="CHEBI:83586"/>
        <dbReference type="EC" id="2.7.4.27"/>
    </reaction>
</comment>
<comment type="similarity">
    <text evidence="1">Belongs to the pyruvate, phosphate/water dikinase regulatory protein family. PDRP subfamily.</text>
</comment>
<protein>
    <recommendedName>
        <fullName evidence="1">Putative pyruvate, phosphate dikinase regulatory protein</fullName>
        <shortName evidence="1">PPDK regulatory protein</shortName>
        <ecNumber evidence="1">2.7.11.32</ecNumber>
        <ecNumber evidence="1">2.7.4.27</ecNumber>
    </recommendedName>
</protein>